<organism>
    <name type="scientific">Saccharophagus degradans (strain 2-40 / ATCC 43961 / DSM 17024)</name>
    <dbReference type="NCBI Taxonomy" id="203122"/>
    <lineage>
        <taxon>Bacteria</taxon>
        <taxon>Pseudomonadati</taxon>
        <taxon>Pseudomonadota</taxon>
        <taxon>Gammaproteobacteria</taxon>
        <taxon>Cellvibrionales</taxon>
        <taxon>Cellvibrionaceae</taxon>
        <taxon>Saccharophagus</taxon>
    </lineage>
</organism>
<feature type="chain" id="PRO_0000263588" description="Small ribosomal subunit protein uS12">
    <location>
        <begin position="1"/>
        <end position="123"/>
    </location>
</feature>
<feature type="region of interest" description="Disordered" evidence="3">
    <location>
        <begin position="100"/>
        <end position="123"/>
    </location>
</feature>
<feature type="compositionally biased region" description="Basic residues" evidence="3">
    <location>
        <begin position="113"/>
        <end position="123"/>
    </location>
</feature>
<feature type="modified residue" description="3-methylthioaspartic acid" evidence="1">
    <location>
        <position position="89"/>
    </location>
</feature>
<accession>Q21M91</accession>
<protein>
    <recommendedName>
        <fullName evidence="2">Small ribosomal subunit protein uS12</fullName>
    </recommendedName>
    <alternativeName>
        <fullName evidence="4">30S ribosomal protein S12</fullName>
    </alternativeName>
</protein>
<sequence length="123" mass="13769">MATINQLVRKPRKRKVQKSDVPALQACPQRRGVCTRVYTTTPKKPNSALRKVCRVRLTNGFEVTSYIGGEGHNLQEHSVVLIRGGRVKDLPGVRYHTVRGSLDTSGVSDRKQGRSKYGTKRPK</sequence>
<evidence type="ECO:0000250" key="1"/>
<evidence type="ECO:0000255" key="2">
    <source>
        <dbReference type="HAMAP-Rule" id="MF_00403"/>
    </source>
</evidence>
<evidence type="ECO:0000256" key="3">
    <source>
        <dbReference type="SAM" id="MobiDB-lite"/>
    </source>
</evidence>
<evidence type="ECO:0000305" key="4"/>
<keyword id="KW-0488">Methylation</keyword>
<keyword id="KW-1185">Reference proteome</keyword>
<keyword id="KW-0687">Ribonucleoprotein</keyword>
<keyword id="KW-0689">Ribosomal protein</keyword>
<keyword id="KW-0694">RNA-binding</keyword>
<keyword id="KW-0699">rRNA-binding</keyword>
<keyword id="KW-0820">tRNA-binding</keyword>
<proteinExistence type="inferred from homology"/>
<reference key="1">
    <citation type="journal article" date="2008" name="PLoS Genet.">
        <title>Complete genome sequence of the complex carbohydrate-degrading marine bacterium, Saccharophagus degradans strain 2-40 T.</title>
        <authorList>
            <person name="Weiner R.M."/>
            <person name="Taylor L.E. II"/>
            <person name="Henrissat B."/>
            <person name="Hauser L."/>
            <person name="Land M."/>
            <person name="Coutinho P.M."/>
            <person name="Rancurel C."/>
            <person name="Saunders E.H."/>
            <person name="Longmire A.G."/>
            <person name="Zhang H."/>
            <person name="Bayer E.A."/>
            <person name="Gilbert H.J."/>
            <person name="Larimer F."/>
            <person name="Zhulin I.B."/>
            <person name="Ekborg N.A."/>
            <person name="Lamed R."/>
            <person name="Richardson P.M."/>
            <person name="Borovok I."/>
            <person name="Hutcheson S."/>
        </authorList>
    </citation>
    <scope>NUCLEOTIDE SEQUENCE [LARGE SCALE GENOMIC DNA]</scope>
    <source>
        <strain>2-40 / ATCC 43961 / DSM 17024</strain>
    </source>
</reference>
<gene>
    <name evidence="2" type="primary">rpsL</name>
    <name type="ordered locus">Sde_0926</name>
</gene>
<dbReference type="EMBL" id="CP000282">
    <property type="protein sequence ID" value="ABD80188.1"/>
    <property type="molecule type" value="Genomic_DNA"/>
</dbReference>
<dbReference type="RefSeq" id="WP_011467409.1">
    <property type="nucleotide sequence ID" value="NC_007912.1"/>
</dbReference>
<dbReference type="SMR" id="Q21M91"/>
<dbReference type="STRING" id="203122.Sde_0926"/>
<dbReference type="GeneID" id="98612612"/>
<dbReference type="KEGG" id="sde:Sde_0926"/>
<dbReference type="eggNOG" id="COG0048">
    <property type="taxonomic scope" value="Bacteria"/>
</dbReference>
<dbReference type="HOGENOM" id="CLU_104295_1_2_6"/>
<dbReference type="OrthoDB" id="9802366at2"/>
<dbReference type="Proteomes" id="UP000001947">
    <property type="component" value="Chromosome"/>
</dbReference>
<dbReference type="GO" id="GO:0015935">
    <property type="term" value="C:small ribosomal subunit"/>
    <property type="evidence" value="ECO:0007669"/>
    <property type="project" value="InterPro"/>
</dbReference>
<dbReference type="GO" id="GO:0019843">
    <property type="term" value="F:rRNA binding"/>
    <property type="evidence" value="ECO:0007669"/>
    <property type="project" value="UniProtKB-UniRule"/>
</dbReference>
<dbReference type="GO" id="GO:0003735">
    <property type="term" value="F:structural constituent of ribosome"/>
    <property type="evidence" value="ECO:0007669"/>
    <property type="project" value="InterPro"/>
</dbReference>
<dbReference type="GO" id="GO:0000049">
    <property type="term" value="F:tRNA binding"/>
    <property type="evidence" value="ECO:0007669"/>
    <property type="project" value="UniProtKB-UniRule"/>
</dbReference>
<dbReference type="GO" id="GO:0006412">
    <property type="term" value="P:translation"/>
    <property type="evidence" value="ECO:0007669"/>
    <property type="project" value="UniProtKB-UniRule"/>
</dbReference>
<dbReference type="CDD" id="cd03368">
    <property type="entry name" value="Ribosomal_S12"/>
    <property type="match status" value="1"/>
</dbReference>
<dbReference type="FunFam" id="2.40.50.140:FF:000001">
    <property type="entry name" value="30S ribosomal protein S12"/>
    <property type="match status" value="1"/>
</dbReference>
<dbReference type="Gene3D" id="2.40.50.140">
    <property type="entry name" value="Nucleic acid-binding proteins"/>
    <property type="match status" value="1"/>
</dbReference>
<dbReference type="HAMAP" id="MF_00403_B">
    <property type="entry name" value="Ribosomal_uS12_B"/>
    <property type="match status" value="1"/>
</dbReference>
<dbReference type="InterPro" id="IPR012340">
    <property type="entry name" value="NA-bd_OB-fold"/>
</dbReference>
<dbReference type="InterPro" id="IPR006032">
    <property type="entry name" value="Ribosomal_uS12"/>
</dbReference>
<dbReference type="InterPro" id="IPR005679">
    <property type="entry name" value="Ribosomal_uS12_bac"/>
</dbReference>
<dbReference type="NCBIfam" id="TIGR00981">
    <property type="entry name" value="rpsL_bact"/>
    <property type="match status" value="1"/>
</dbReference>
<dbReference type="PANTHER" id="PTHR11652">
    <property type="entry name" value="30S RIBOSOMAL PROTEIN S12 FAMILY MEMBER"/>
    <property type="match status" value="1"/>
</dbReference>
<dbReference type="Pfam" id="PF00164">
    <property type="entry name" value="Ribosom_S12_S23"/>
    <property type="match status" value="1"/>
</dbReference>
<dbReference type="PIRSF" id="PIRSF002133">
    <property type="entry name" value="Ribosomal_S12/S23"/>
    <property type="match status" value="1"/>
</dbReference>
<dbReference type="PRINTS" id="PR01034">
    <property type="entry name" value="RIBOSOMALS12"/>
</dbReference>
<dbReference type="SUPFAM" id="SSF50249">
    <property type="entry name" value="Nucleic acid-binding proteins"/>
    <property type="match status" value="1"/>
</dbReference>
<dbReference type="PROSITE" id="PS00055">
    <property type="entry name" value="RIBOSOMAL_S12"/>
    <property type="match status" value="1"/>
</dbReference>
<comment type="function">
    <text evidence="2">With S4 and S5 plays an important role in translational accuracy.</text>
</comment>
<comment type="function">
    <text evidence="2">Interacts with and stabilizes bases of the 16S rRNA that are involved in tRNA selection in the A site and with the mRNA backbone. Located at the interface of the 30S and 50S subunits, it traverses the body of the 30S subunit contacting proteins on the other side and probably holding the rRNA structure together. The combined cluster of proteins S8, S12 and S17 appears to hold together the shoulder and platform of the 30S subunit.</text>
</comment>
<comment type="subunit">
    <text evidence="2">Part of the 30S ribosomal subunit. Contacts proteins S8 and S17. May interact with IF1 in the 30S initiation complex.</text>
</comment>
<comment type="similarity">
    <text evidence="2">Belongs to the universal ribosomal protein uS12 family.</text>
</comment>
<name>RS12_SACD2</name>